<dbReference type="EC" id="7.1.1.-" evidence="1"/>
<dbReference type="EMBL" id="CP000117">
    <property type="protein sequence ID" value="ABA22409.1"/>
    <property type="molecule type" value="Genomic_DNA"/>
</dbReference>
<dbReference type="SMR" id="Q3M9C7"/>
<dbReference type="STRING" id="240292.Ava_2796"/>
<dbReference type="KEGG" id="ava:Ava_2796"/>
<dbReference type="eggNOG" id="COG1008">
    <property type="taxonomic scope" value="Bacteria"/>
</dbReference>
<dbReference type="HOGENOM" id="CLU_007100_4_0_3"/>
<dbReference type="Proteomes" id="UP000002533">
    <property type="component" value="Chromosome"/>
</dbReference>
<dbReference type="GO" id="GO:0031676">
    <property type="term" value="C:plasma membrane-derived thylakoid membrane"/>
    <property type="evidence" value="ECO:0007669"/>
    <property type="project" value="UniProtKB-SubCell"/>
</dbReference>
<dbReference type="GO" id="GO:0008137">
    <property type="term" value="F:NADH dehydrogenase (ubiquinone) activity"/>
    <property type="evidence" value="ECO:0007669"/>
    <property type="project" value="InterPro"/>
</dbReference>
<dbReference type="GO" id="GO:0048039">
    <property type="term" value="F:ubiquinone binding"/>
    <property type="evidence" value="ECO:0007669"/>
    <property type="project" value="TreeGrafter"/>
</dbReference>
<dbReference type="GO" id="GO:0042773">
    <property type="term" value="P:ATP synthesis coupled electron transport"/>
    <property type="evidence" value="ECO:0007669"/>
    <property type="project" value="InterPro"/>
</dbReference>
<dbReference type="GO" id="GO:0015990">
    <property type="term" value="P:electron transport coupled proton transport"/>
    <property type="evidence" value="ECO:0007669"/>
    <property type="project" value="TreeGrafter"/>
</dbReference>
<dbReference type="HAMAP" id="MF_00491">
    <property type="entry name" value="NDH1_NuoM"/>
    <property type="match status" value="1"/>
</dbReference>
<dbReference type="InterPro" id="IPR022997">
    <property type="entry name" value="NADH_Q_OxRdtase_chain4"/>
</dbReference>
<dbReference type="InterPro" id="IPR010227">
    <property type="entry name" value="NADH_Q_OxRdtase_chainM/4"/>
</dbReference>
<dbReference type="InterPro" id="IPR003918">
    <property type="entry name" value="NADH_UbQ_OxRdtase"/>
</dbReference>
<dbReference type="InterPro" id="IPR001750">
    <property type="entry name" value="ND/Mrp_TM"/>
</dbReference>
<dbReference type="NCBIfam" id="TIGR01972">
    <property type="entry name" value="NDH_I_M"/>
    <property type="match status" value="1"/>
</dbReference>
<dbReference type="NCBIfam" id="NF009212">
    <property type="entry name" value="PRK12561.1"/>
    <property type="match status" value="1"/>
</dbReference>
<dbReference type="PANTHER" id="PTHR43507:SF21">
    <property type="entry name" value="NAD(P)H-QUINONE OXIDOREDUCTASE CHAIN 4, CHLOROPLASTIC"/>
    <property type="match status" value="1"/>
</dbReference>
<dbReference type="PANTHER" id="PTHR43507">
    <property type="entry name" value="NADH-UBIQUINONE OXIDOREDUCTASE CHAIN 4"/>
    <property type="match status" value="1"/>
</dbReference>
<dbReference type="Pfam" id="PF00361">
    <property type="entry name" value="Proton_antipo_M"/>
    <property type="match status" value="1"/>
</dbReference>
<dbReference type="PRINTS" id="PR01437">
    <property type="entry name" value="NUOXDRDTASE4"/>
</dbReference>
<keyword id="KW-0472">Membrane</keyword>
<keyword id="KW-0520">NAD</keyword>
<keyword id="KW-0521">NADP</keyword>
<keyword id="KW-0618">Plastoquinone</keyword>
<keyword id="KW-0874">Quinone</keyword>
<keyword id="KW-0793">Thylakoid</keyword>
<keyword id="KW-1278">Translocase</keyword>
<keyword id="KW-0812">Transmembrane</keyword>
<keyword id="KW-1133">Transmembrane helix</keyword>
<name>NU4C3_TRIV2</name>
<sequence>MNLIEFPWLTAIIALPLVAALAIPIIPDKEGKTVRWYGLGVAFADFALMIAAFWHYYDFQSSTYQFVEKYHWLPQIGLNWSVAVDGLSMPLLLLTGLINTLAIFAAWKVTNKPRLFYGLMLVMYSAQLGVFVAQDLLLFFLMWEIELVPVYLLISIWGGPKRRYAATKFILYTAAASIFILVAGFALAFSGDTVTFDIAALGMKEYPKAIELLAYAGFLIAFGVKLPIFPLHTWLPDAHGEASAPGSMILAGVLLKMGGYALIRFNIEMLPDAHVYFAPVLAILGVVNIVYGACCAFAQTNLKRRLAYSSIAHMGFVLIGLASYTEIGVSGAVLQMVSHGLVAASLFFLTGVTYERTHTLLMDKMGGIGKVMPKTFALYTAGAMASLALPGMSGFVGELMVFIGIATSDVYSSSFKVVVVLLSAVGVILTPIYLLSLLRQVFYGKQSEELHLDAFIPDVKPRELFITASLLLPIIGIGLYPKLITQTYDVKTVEIAAHARQVLPVVAGQQPSSLYSQIFTAPTLANAEVESLVNISK</sequence>
<gene>
    <name evidence="1" type="primary">ndhD3</name>
    <name type="ordered locus">Ava_2796</name>
</gene>
<proteinExistence type="inferred from homology"/>
<accession>Q3M9C7</accession>
<comment type="function">
    <text evidence="1">NDH-1 shuttles electrons from NAD(P)H, via FMN and iron-sulfur (Fe-S) centers, to quinones in the respiratory chain. The immediate electron acceptor for the enzyme in this species is believed to be plastoquinone. Couples the redox reaction to proton translocation (for every two electrons transferred, four hydrogen ions are translocated across the cytoplasmic membrane), and thus conserves the redox energy in a proton gradient.</text>
</comment>
<comment type="catalytic activity">
    <reaction evidence="1">
        <text>a plastoquinone + NADH + (n+1) H(+)(in) = a plastoquinol + NAD(+) + n H(+)(out)</text>
        <dbReference type="Rhea" id="RHEA:42608"/>
        <dbReference type="Rhea" id="RHEA-COMP:9561"/>
        <dbReference type="Rhea" id="RHEA-COMP:9562"/>
        <dbReference type="ChEBI" id="CHEBI:15378"/>
        <dbReference type="ChEBI" id="CHEBI:17757"/>
        <dbReference type="ChEBI" id="CHEBI:57540"/>
        <dbReference type="ChEBI" id="CHEBI:57945"/>
        <dbReference type="ChEBI" id="CHEBI:62192"/>
    </reaction>
</comment>
<comment type="catalytic activity">
    <reaction evidence="1">
        <text>a plastoquinone + NADPH + (n+1) H(+)(in) = a plastoquinol + NADP(+) + n H(+)(out)</text>
        <dbReference type="Rhea" id="RHEA:42612"/>
        <dbReference type="Rhea" id="RHEA-COMP:9561"/>
        <dbReference type="Rhea" id="RHEA-COMP:9562"/>
        <dbReference type="ChEBI" id="CHEBI:15378"/>
        <dbReference type="ChEBI" id="CHEBI:17757"/>
        <dbReference type="ChEBI" id="CHEBI:57783"/>
        <dbReference type="ChEBI" id="CHEBI:58349"/>
        <dbReference type="ChEBI" id="CHEBI:62192"/>
    </reaction>
</comment>
<comment type="subcellular location">
    <subcellularLocation>
        <location evidence="1">Cellular thylakoid membrane</location>
        <topology evidence="1">Multi-pass membrane protein</topology>
    </subcellularLocation>
</comment>
<comment type="similarity">
    <text evidence="1">Belongs to the complex I subunit 4 family.</text>
</comment>
<reference key="1">
    <citation type="journal article" date="2014" name="Stand. Genomic Sci.">
        <title>Complete genome sequence of Anabaena variabilis ATCC 29413.</title>
        <authorList>
            <person name="Thiel T."/>
            <person name="Pratte B.S."/>
            <person name="Zhong J."/>
            <person name="Goodwin L."/>
            <person name="Copeland A."/>
            <person name="Lucas S."/>
            <person name="Han C."/>
            <person name="Pitluck S."/>
            <person name="Land M.L."/>
            <person name="Kyrpides N.C."/>
            <person name="Woyke T."/>
        </authorList>
    </citation>
    <scope>NUCLEOTIDE SEQUENCE [LARGE SCALE GENOMIC DNA]</scope>
    <source>
        <strain>ATCC 29413 / PCC 7937</strain>
    </source>
</reference>
<organism>
    <name type="scientific">Trichormus variabilis (strain ATCC 29413 / PCC 7937)</name>
    <name type="common">Anabaena variabilis</name>
    <dbReference type="NCBI Taxonomy" id="240292"/>
    <lineage>
        <taxon>Bacteria</taxon>
        <taxon>Bacillati</taxon>
        <taxon>Cyanobacteriota</taxon>
        <taxon>Cyanophyceae</taxon>
        <taxon>Nostocales</taxon>
        <taxon>Nostocaceae</taxon>
        <taxon>Trichormus</taxon>
    </lineage>
</organism>
<protein>
    <recommendedName>
        <fullName evidence="1">NAD(P)H-quinone oxidoreductase chain 4 3</fullName>
        <ecNumber evidence="1">7.1.1.-</ecNumber>
    </recommendedName>
    <alternativeName>
        <fullName evidence="1">NAD(P)H dehydrogenase I, chain 4 3</fullName>
    </alternativeName>
    <alternativeName>
        <fullName evidence="1">NDH-1, chain 4 3</fullName>
    </alternativeName>
</protein>
<evidence type="ECO:0000255" key="1">
    <source>
        <dbReference type="HAMAP-Rule" id="MF_00491"/>
    </source>
</evidence>
<feature type="chain" id="PRO_5000104130" description="NAD(P)H-quinone oxidoreductase chain 4 3">
    <location>
        <begin position="1"/>
        <end position="537"/>
    </location>
</feature>
<feature type="transmembrane region" description="Helical" evidence="1">
    <location>
        <begin position="6"/>
        <end position="26"/>
    </location>
</feature>
<feature type="transmembrane region" description="Helical" evidence="1">
    <location>
        <begin position="36"/>
        <end position="56"/>
    </location>
</feature>
<feature type="transmembrane region" description="Helical" evidence="1">
    <location>
        <begin position="87"/>
        <end position="107"/>
    </location>
</feature>
<feature type="transmembrane region" description="Helical" evidence="1">
    <location>
        <begin position="115"/>
        <end position="135"/>
    </location>
</feature>
<feature type="transmembrane region" description="Helical" evidence="1">
    <location>
        <begin position="136"/>
        <end position="156"/>
    </location>
</feature>
<feature type="transmembrane region" description="Helical" evidence="1">
    <location>
        <begin position="169"/>
        <end position="189"/>
    </location>
</feature>
<feature type="transmembrane region" description="Helical" evidence="1">
    <location>
        <begin position="209"/>
        <end position="229"/>
    </location>
</feature>
<feature type="transmembrane region" description="Helical" evidence="1">
    <location>
        <begin position="243"/>
        <end position="263"/>
    </location>
</feature>
<feature type="transmembrane region" description="Helical" evidence="1">
    <location>
        <begin position="277"/>
        <end position="297"/>
    </location>
</feature>
<feature type="transmembrane region" description="Helical" evidence="1">
    <location>
        <begin position="314"/>
        <end position="334"/>
    </location>
</feature>
<feature type="transmembrane region" description="Helical" evidence="1">
    <location>
        <begin position="335"/>
        <end position="355"/>
    </location>
</feature>
<feature type="transmembrane region" description="Helical" evidence="1">
    <location>
        <begin position="387"/>
        <end position="407"/>
    </location>
</feature>
<feature type="transmembrane region" description="Helical" evidence="1">
    <location>
        <begin position="417"/>
        <end position="437"/>
    </location>
</feature>